<evidence type="ECO:0000250" key="1">
    <source>
        <dbReference type="UniProtKB" id="Q86TW2"/>
    </source>
</evidence>
<evidence type="ECO:0000255" key="2">
    <source>
        <dbReference type="PROSITE-ProRule" id="PRU00159"/>
    </source>
</evidence>
<evidence type="ECO:0000305" key="3"/>
<keyword id="KW-0067">ATP-binding</keyword>
<keyword id="KW-0418">Kinase</keyword>
<keyword id="KW-0496">Mitochondrion</keyword>
<keyword id="KW-0547">Nucleotide-binding</keyword>
<keyword id="KW-1185">Reference proteome</keyword>
<keyword id="KW-0723">Serine/threonine-protein kinase</keyword>
<keyword id="KW-0808">Transferase</keyword>
<keyword id="KW-0809">Transit peptide</keyword>
<name>ADCK1_XENLA</name>
<protein>
    <recommendedName>
        <fullName evidence="1">AarF domain-containing protein kinase 1</fullName>
        <ecNumber evidence="2">2.7.-.-</ecNumber>
    </recommendedName>
</protein>
<reference key="1">
    <citation type="submission" date="2004-06" db="EMBL/GenBank/DDBJ databases">
        <authorList>
            <consortium name="NIH - Xenopus Gene Collection (XGC) project"/>
        </authorList>
    </citation>
    <scope>NUCLEOTIDE SEQUENCE [LARGE SCALE MRNA]</scope>
    <source>
        <tissue>Embryo</tissue>
    </source>
</reference>
<proteinExistence type="evidence at transcript level"/>
<sequence length="520" mass="59544">MVRGIIRIASLASVSLSSSGFFLYGTGYWDPSDFGVVRIGRAVLTTAAITWDYFTKLRHVEAGTEEYENIKSQVHLRSAHRLLDLCCFNRGTFIKVGQHLAALEYLVPPEYTKTLSVLHSQAPCTPFTDVVQVIREDLGKEISEVFEEFEKTPLGAASLAQVHRAVLQDGRKVAVKVQHPKVQAQSSRDILIMEVLLHVVKKIFPQFEFMWLIEEAKKNLPLELDFQNEGRNAEKMSSIVSSFSFLRIPRIYWELSTKRVLVMEYMEGGQVNDREYMKRNQIDVNKVSHALGKLYSEMIFVHGFVHCDPHPGNVLVRQNPENCAPEIILLDHGLYQVLTESFRLDYCSLWQALIAADKERIRIYSQRLGAGELYPLFACMLTARSWESVNRGIYENTVSKEEIHEIRSNAATYLPEISQLLASVPRQMLLLLKTNDLLRGIETSLGTHSSSSAFFYMSRCCVRALARHRKEKADSLWSYIHISLSETFCLGQLQMYEIALRLQSCIGRWINHVLLWLYLQ</sequence>
<gene>
    <name type="primary">adck1</name>
</gene>
<organism>
    <name type="scientific">Xenopus laevis</name>
    <name type="common">African clawed frog</name>
    <dbReference type="NCBI Taxonomy" id="8355"/>
    <lineage>
        <taxon>Eukaryota</taxon>
        <taxon>Metazoa</taxon>
        <taxon>Chordata</taxon>
        <taxon>Craniata</taxon>
        <taxon>Vertebrata</taxon>
        <taxon>Euteleostomi</taxon>
        <taxon>Amphibia</taxon>
        <taxon>Batrachia</taxon>
        <taxon>Anura</taxon>
        <taxon>Pipoidea</taxon>
        <taxon>Pipidae</taxon>
        <taxon>Xenopodinae</taxon>
        <taxon>Xenopus</taxon>
        <taxon>Xenopus</taxon>
    </lineage>
</organism>
<comment type="function">
    <text evidence="1 3">Appears to be essential for maintaining mitochondrial cristae formation and mitochondrial function by acting via YME1L1 in a kinase-independent manner to regulate essential mitochondrial structural proteins OPA1 and IMMT (By similarity). The action of this enzyme is not yet clear. It is not known if it has protein kinase activity and what type of substrate it would phosphorylate (Ser, Thr or Tyr) (Probable).</text>
</comment>
<comment type="subcellular location">
    <subcellularLocation>
        <location evidence="1">Mitochondrion</location>
    </subcellularLocation>
</comment>
<comment type="similarity">
    <text evidence="3">Belongs to the protein kinase superfamily. ADCK protein kinase family.</text>
</comment>
<dbReference type="EC" id="2.7.-.-" evidence="2"/>
<dbReference type="EMBL" id="BC072263">
    <property type="protein sequence ID" value="AAH72263.1"/>
    <property type="molecule type" value="mRNA"/>
</dbReference>
<dbReference type="RefSeq" id="NP_001085405.1">
    <property type="nucleotide sequence ID" value="NM_001091936.1"/>
</dbReference>
<dbReference type="SMR" id="Q6INL7"/>
<dbReference type="DNASU" id="443831"/>
<dbReference type="GeneID" id="443831"/>
<dbReference type="KEGG" id="xla:443831"/>
<dbReference type="AGR" id="Xenbase:XB-GENE-1006950"/>
<dbReference type="CTD" id="443831"/>
<dbReference type="Xenbase" id="XB-GENE-1006950">
    <property type="gene designation" value="adck1.L"/>
</dbReference>
<dbReference type="OrthoDB" id="427480at2759"/>
<dbReference type="Proteomes" id="UP000186698">
    <property type="component" value="Chromosome 8L"/>
</dbReference>
<dbReference type="Bgee" id="443831">
    <property type="expression patterns" value="Expressed in neurula embryo and 16 other cell types or tissues"/>
</dbReference>
<dbReference type="GO" id="GO:0005743">
    <property type="term" value="C:mitochondrial inner membrane"/>
    <property type="evidence" value="ECO:0000318"/>
    <property type="project" value="GO_Central"/>
</dbReference>
<dbReference type="GO" id="GO:0005524">
    <property type="term" value="F:ATP binding"/>
    <property type="evidence" value="ECO:0007669"/>
    <property type="project" value="UniProtKB-KW"/>
</dbReference>
<dbReference type="GO" id="GO:0004674">
    <property type="term" value="F:protein serine/threonine kinase activity"/>
    <property type="evidence" value="ECO:0007669"/>
    <property type="project" value="UniProtKB-KW"/>
</dbReference>
<dbReference type="GO" id="GO:0055088">
    <property type="term" value="P:lipid homeostasis"/>
    <property type="evidence" value="ECO:0000318"/>
    <property type="project" value="GO_Central"/>
</dbReference>
<dbReference type="GO" id="GO:0007005">
    <property type="term" value="P:mitochondrion organization"/>
    <property type="evidence" value="ECO:0000318"/>
    <property type="project" value="GO_Central"/>
</dbReference>
<dbReference type="CDD" id="cd13969">
    <property type="entry name" value="ADCK1-like"/>
    <property type="match status" value="1"/>
</dbReference>
<dbReference type="Gene3D" id="1.10.510.10">
    <property type="entry name" value="Transferase(Phosphotransferase) domain 1"/>
    <property type="match status" value="1"/>
</dbReference>
<dbReference type="InterPro" id="IPR004147">
    <property type="entry name" value="ABC1_dom"/>
</dbReference>
<dbReference type="InterPro" id="IPR045307">
    <property type="entry name" value="ADCK1_dom"/>
</dbReference>
<dbReference type="InterPro" id="IPR011009">
    <property type="entry name" value="Kinase-like_dom_sf"/>
</dbReference>
<dbReference type="InterPro" id="IPR051130">
    <property type="entry name" value="Mito_struct-func_regulator"/>
</dbReference>
<dbReference type="InterPro" id="IPR000719">
    <property type="entry name" value="Prot_kinase_dom"/>
</dbReference>
<dbReference type="PANTHER" id="PTHR43173:SF19">
    <property type="entry name" value="AARF DOMAIN-CONTAINING PROTEIN KINASE 1"/>
    <property type="match status" value="1"/>
</dbReference>
<dbReference type="PANTHER" id="PTHR43173">
    <property type="entry name" value="ABC1 FAMILY PROTEIN"/>
    <property type="match status" value="1"/>
</dbReference>
<dbReference type="Pfam" id="PF03109">
    <property type="entry name" value="ABC1"/>
    <property type="match status" value="1"/>
</dbReference>
<dbReference type="SUPFAM" id="SSF56112">
    <property type="entry name" value="Protein kinase-like (PK-like)"/>
    <property type="match status" value="1"/>
</dbReference>
<dbReference type="PROSITE" id="PS50011">
    <property type="entry name" value="PROTEIN_KINASE_DOM"/>
    <property type="match status" value="1"/>
</dbReference>
<accession>Q6INL7</accession>
<feature type="transit peptide" description="Mitochondrion" evidence="3">
    <location>
        <begin position="1"/>
        <end status="unknown"/>
    </location>
</feature>
<feature type="chain" id="PRO_0000252252" description="AarF domain-containing protein kinase 1">
    <location>
        <begin status="unknown"/>
        <end position="520"/>
    </location>
</feature>
<feature type="domain" description="Protein kinase" evidence="2">
    <location>
        <begin position="148"/>
        <end position="455"/>
    </location>
</feature>
<feature type="active site" description="Proton acceptor" evidence="2">
    <location>
        <position position="308"/>
    </location>
</feature>
<feature type="binding site" evidence="2">
    <location>
        <begin position="154"/>
        <end position="162"/>
    </location>
    <ligand>
        <name>ATP</name>
        <dbReference type="ChEBI" id="CHEBI:30616"/>
    </ligand>
</feature>
<feature type="binding site" evidence="2">
    <location>
        <position position="176"/>
    </location>
    <ligand>
        <name>ATP</name>
        <dbReference type="ChEBI" id="CHEBI:30616"/>
    </ligand>
</feature>